<proteinExistence type="inferred from homology"/>
<protein>
    <recommendedName>
        <fullName evidence="1">Large ribosomal subunit protein bL31B</fullName>
    </recommendedName>
    <alternativeName>
        <fullName evidence="2">50S ribosomal protein L31 type B</fullName>
    </alternativeName>
</protein>
<feature type="chain" id="PRO_1000126818" description="Large ribosomal subunit protein bL31B">
    <location>
        <begin position="1"/>
        <end position="81"/>
    </location>
</feature>
<gene>
    <name evidence="1" type="primary">rpmE2</name>
    <name type="ordered locus">lhv_0281</name>
</gene>
<organism>
    <name type="scientific">Lactobacillus helveticus (strain DPC 4571)</name>
    <dbReference type="NCBI Taxonomy" id="405566"/>
    <lineage>
        <taxon>Bacteria</taxon>
        <taxon>Bacillati</taxon>
        <taxon>Bacillota</taxon>
        <taxon>Bacilli</taxon>
        <taxon>Lactobacillales</taxon>
        <taxon>Lactobacillaceae</taxon>
        <taxon>Lactobacillus</taxon>
    </lineage>
</organism>
<name>RL31B_LACH4</name>
<comment type="subunit">
    <text evidence="1">Part of the 50S ribosomal subunit.</text>
</comment>
<comment type="similarity">
    <text evidence="1">Belongs to the bacterial ribosomal protein bL31 family. Type B subfamily.</text>
</comment>
<evidence type="ECO:0000255" key="1">
    <source>
        <dbReference type="HAMAP-Rule" id="MF_00502"/>
    </source>
</evidence>
<evidence type="ECO:0000305" key="2"/>
<sequence>MKQGIHPDFQKVVFMDSATGAKFLAGSTLKPEETVDYEGETYPLVRVEVSSDSHPFYTGKQKFAQADGRIEKFNKKYGLKK</sequence>
<accession>A8YXH9</accession>
<reference key="1">
    <citation type="journal article" date="2008" name="J. Bacteriol.">
        <title>Genome sequence of Lactobacillus helveticus: an organism distinguished by selective gene loss and IS element expansion.</title>
        <authorList>
            <person name="Callanan M."/>
            <person name="Kaleta P."/>
            <person name="O'Callaghan J."/>
            <person name="O'Sullivan O."/>
            <person name="Jordan K."/>
            <person name="McAuliffe O."/>
            <person name="Sangrador-Vegas A."/>
            <person name="Slattery L."/>
            <person name="Fitzgerald G.F."/>
            <person name="Beresford T."/>
            <person name="Ross R.P."/>
        </authorList>
    </citation>
    <scope>NUCLEOTIDE SEQUENCE [LARGE SCALE GENOMIC DNA]</scope>
    <source>
        <strain>DPC 4571</strain>
    </source>
</reference>
<dbReference type="EMBL" id="CP000517">
    <property type="protein sequence ID" value="ABX26510.1"/>
    <property type="molecule type" value="Genomic_DNA"/>
</dbReference>
<dbReference type="RefSeq" id="WP_003625728.1">
    <property type="nucleotide sequence ID" value="NC_010080.1"/>
</dbReference>
<dbReference type="SMR" id="A8YXH9"/>
<dbReference type="KEGG" id="lhe:lhv_0281"/>
<dbReference type="eggNOG" id="COG0254">
    <property type="taxonomic scope" value="Bacteria"/>
</dbReference>
<dbReference type="HOGENOM" id="CLU_114306_2_2_9"/>
<dbReference type="Proteomes" id="UP000000790">
    <property type="component" value="Chromosome"/>
</dbReference>
<dbReference type="GO" id="GO:1990904">
    <property type="term" value="C:ribonucleoprotein complex"/>
    <property type="evidence" value="ECO:0007669"/>
    <property type="project" value="UniProtKB-KW"/>
</dbReference>
<dbReference type="GO" id="GO:0005840">
    <property type="term" value="C:ribosome"/>
    <property type="evidence" value="ECO:0007669"/>
    <property type="project" value="UniProtKB-KW"/>
</dbReference>
<dbReference type="GO" id="GO:0003735">
    <property type="term" value="F:structural constituent of ribosome"/>
    <property type="evidence" value="ECO:0007669"/>
    <property type="project" value="InterPro"/>
</dbReference>
<dbReference type="GO" id="GO:0006412">
    <property type="term" value="P:translation"/>
    <property type="evidence" value="ECO:0007669"/>
    <property type="project" value="UniProtKB-UniRule"/>
</dbReference>
<dbReference type="Gene3D" id="4.10.830.30">
    <property type="entry name" value="Ribosomal protein L31"/>
    <property type="match status" value="1"/>
</dbReference>
<dbReference type="HAMAP" id="MF_00502">
    <property type="entry name" value="Ribosomal_bL31_2"/>
    <property type="match status" value="1"/>
</dbReference>
<dbReference type="InterPro" id="IPR034704">
    <property type="entry name" value="Ribosomal_bL28/bL31-like_sf"/>
</dbReference>
<dbReference type="InterPro" id="IPR002150">
    <property type="entry name" value="Ribosomal_bL31"/>
</dbReference>
<dbReference type="InterPro" id="IPR027493">
    <property type="entry name" value="Ribosomal_bL31_B"/>
</dbReference>
<dbReference type="InterPro" id="IPR042105">
    <property type="entry name" value="Ribosomal_bL31_sf"/>
</dbReference>
<dbReference type="NCBIfam" id="TIGR00105">
    <property type="entry name" value="L31"/>
    <property type="match status" value="1"/>
</dbReference>
<dbReference type="NCBIfam" id="NF002462">
    <property type="entry name" value="PRK01678.1"/>
    <property type="match status" value="1"/>
</dbReference>
<dbReference type="PANTHER" id="PTHR33280">
    <property type="entry name" value="50S RIBOSOMAL PROTEIN L31, CHLOROPLASTIC"/>
    <property type="match status" value="1"/>
</dbReference>
<dbReference type="PANTHER" id="PTHR33280:SF1">
    <property type="entry name" value="LARGE RIBOSOMAL SUBUNIT PROTEIN BL31C"/>
    <property type="match status" value="1"/>
</dbReference>
<dbReference type="Pfam" id="PF01197">
    <property type="entry name" value="Ribosomal_L31"/>
    <property type="match status" value="1"/>
</dbReference>
<dbReference type="PRINTS" id="PR01249">
    <property type="entry name" value="RIBOSOMALL31"/>
</dbReference>
<dbReference type="SUPFAM" id="SSF143800">
    <property type="entry name" value="L28p-like"/>
    <property type="match status" value="1"/>
</dbReference>
<dbReference type="PROSITE" id="PS01143">
    <property type="entry name" value="RIBOSOMAL_L31"/>
    <property type="match status" value="1"/>
</dbReference>
<keyword id="KW-0687">Ribonucleoprotein</keyword>
<keyword id="KW-0689">Ribosomal protein</keyword>